<gene>
    <name evidence="1" type="primary">atpC</name>
    <name type="ordered locus">HSM_1849</name>
</gene>
<name>ATPE_HISS2</name>
<feature type="chain" id="PRO_1000127862" description="ATP synthase epsilon chain">
    <location>
        <begin position="1"/>
        <end position="142"/>
    </location>
</feature>
<accession>B0UWG4</accession>
<comment type="function">
    <text evidence="1">Produces ATP from ADP in the presence of a proton gradient across the membrane.</text>
</comment>
<comment type="subunit">
    <text evidence="1">F-type ATPases have 2 components, CF(1) - the catalytic core - and CF(0) - the membrane proton channel. CF(1) has five subunits: alpha(3), beta(3), gamma(1), delta(1), epsilon(1). CF(0) has three main subunits: a, b and c.</text>
</comment>
<comment type="subcellular location">
    <subcellularLocation>
        <location evidence="1">Cell inner membrane</location>
        <topology evidence="1">Peripheral membrane protein</topology>
    </subcellularLocation>
</comment>
<comment type="similarity">
    <text evidence="1">Belongs to the ATPase epsilon chain family.</text>
</comment>
<protein>
    <recommendedName>
        <fullName evidence="1">ATP synthase epsilon chain</fullName>
    </recommendedName>
    <alternativeName>
        <fullName evidence="1">ATP synthase F1 sector epsilon subunit</fullName>
    </alternativeName>
    <alternativeName>
        <fullName evidence="1">F-ATPase epsilon subunit</fullName>
    </alternativeName>
</protein>
<proteinExistence type="inferred from homology"/>
<dbReference type="EMBL" id="CP000947">
    <property type="protein sequence ID" value="ACA31637.1"/>
    <property type="molecule type" value="Genomic_DNA"/>
</dbReference>
<dbReference type="RefSeq" id="WP_012340940.1">
    <property type="nucleotide sequence ID" value="NC_010519.1"/>
</dbReference>
<dbReference type="SMR" id="B0UWG4"/>
<dbReference type="STRING" id="228400.HSM_1849"/>
<dbReference type="GeneID" id="31488156"/>
<dbReference type="KEGG" id="hsm:HSM_1849"/>
<dbReference type="HOGENOM" id="CLU_084338_2_0_6"/>
<dbReference type="GO" id="GO:0005886">
    <property type="term" value="C:plasma membrane"/>
    <property type="evidence" value="ECO:0007669"/>
    <property type="project" value="UniProtKB-SubCell"/>
</dbReference>
<dbReference type="GO" id="GO:0045259">
    <property type="term" value="C:proton-transporting ATP synthase complex"/>
    <property type="evidence" value="ECO:0007669"/>
    <property type="project" value="UniProtKB-KW"/>
</dbReference>
<dbReference type="GO" id="GO:0005524">
    <property type="term" value="F:ATP binding"/>
    <property type="evidence" value="ECO:0007669"/>
    <property type="project" value="UniProtKB-UniRule"/>
</dbReference>
<dbReference type="GO" id="GO:0046933">
    <property type="term" value="F:proton-transporting ATP synthase activity, rotational mechanism"/>
    <property type="evidence" value="ECO:0007669"/>
    <property type="project" value="UniProtKB-UniRule"/>
</dbReference>
<dbReference type="CDD" id="cd12152">
    <property type="entry name" value="F1-ATPase_delta"/>
    <property type="match status" value="1"/>
</dbReference>
<dbReference type="FunFam" id="2.60.15.10:FF:000001">
    <property type="entry name" value="ATP synthase epsilon chain"/>
    <property type="match status" value="1"/>
</dbReference>
<dbReference type="Gene3D" id="1.20.5.440">
    <property type="entry name" value="ATP synthase delta/epsilon subunit, C-terminal domain"/>
    <property type="match status" value="1"/>
</dbReference>
<dbReference type="Gene3D" id="2.60.15.10">
    <property type="entry name" value="F0F1 ATP synthase delta/epsilon subunit, N-terminal"/>
    <property type="match status" value="1"/>
</dbReference>
<dbReference type="HAMAP" id="MF_00530">
    <property type="entry name" value="ATP_synth_epsil_bac"/>
    <property type="match status" value="1"/>
</dbReference>
<dbReference type="InterPro" id="IPR036794">
    <property type="entry name" value="ATP_F1_dsu/esu_C_sf"/>
</dbReference>
<dbReference type="InterPro" id="IPR001469">
    <property type="entry name" value="ATP_synth_F1_dsu/esu"/>
</dbReference>
<dbReference type="InterPro" id="IPR020546">
    <property type="entry name" value="ATP_synth_F1_dsu/esu_N"/>
</dbReference>
<dbReference type="InterPro" id="IPR036771">
    <property type="entry name" value="ATPsynth_dsu/esu_N"/>
</dbReference>
<dbReference type="NCBIfam" id="TIGR01216">
    <property type="entry name" value="ATP_synt_epsi"/>
    <property type="match status" value="1"/>
</dbReference>
<dbReference type="NCBIfam" id="NF001847">
    <property type="entry name" value="PRK00571.1-4"/>
    <property type="match status" value="1"/>
</dbReference>
<dbReference type="PANTHER" id="PTHR13822">
    <property type="entry name" value="ATP SYNTHASE DELTA/EPSILON CHAIN"/>
    <property type="match status" value="1"/>
</dbReference>
<dbReference type="PANTHER" id="PTHR13822:SF10">
    <property type="entry name" value="ATP SYNTHASE EPSILON CHAIN, CHLOROPLASTIC"/>
    <property type="match status" value="1"/>
</dbReference>
<dbReference type="Pfam" id="PF02823">
    <property type="entry name" value="ATP-synt_DE_N"/>
    <property type="match status" value="1"/>
</dbReference>
<dbReference type="SUPFAM" id="SSF46604">
    <property type="entry name" value="Epsilon subunit of F1F0-ATP synthase C-terminal domain"/>
    <property type="match status" value="1"/>
</dbReference>
<dbReference type="SUPFAM" id="SSF51344">
    <property type="entry name" value="Epsilon subunit of F1F0-ATP synthase N-terminal domain"/>
    <property type="match status" value="1"/>
</dbReference>
<reference key="1">
    <citation type="submission" date="2008-02" db="EMBL/GenBank/DDBJ databases">
        <title>Complete sequence of Haemophilus somnus 2336.</title>
        <authorList>
            <consortium name="US DOE Joint Genome Institute"/>
            <person name="Siddaramappa S."/>
            <person name="Duncan A.J."/>
            <person name="Challacombe J.F."/>
            <person name="Rainey D."/>
            <person name="Gillaspy A.F."/>
            <person name="Carson M."/>
            <person name="Gipson J."/>
            <person name="Gipson M."/>
            <person name="Bruce D."/>
            <person name="Detter J.C."/>
            <person name="Han C.S."/>
            <person name="Land M."/>
            <person name="Tapia R."/>
            <person name="Thompson L.S."/>
            <person name="Orvis J."/>
            <person name="Zaitshik J."/>
            <person name="Barnes G."/>
            <person name="Brettin T.S."/>
            <person name="Dyer D.W."/>
            <person name="Inzana T.J."/>
        </authorList>
    </citation>
    <scope>NUCLEOTIDE SEQUENCE [LARGE SCALE GENOMIC DNA]</scope>
    <source>
        <strain>2336</strain>
    </source>
</reference>
<sequence>MATFKLIVVSAEQHIFNGEVKGIQATGSEGELGILAGHLPLLTAIKPGIIKITLEDDTEEVIYISGGFLEVQPTIVTVLADVAIRGKELDRERILEAKRKAEQNIVSGAKDASYEMLVSKLSRELAKLRAYELTDRLTQRKR</sequence>
<organism>
    <name type="scientific">Histophilus somni (strain 2336)</name>
    <name type="common">Haemophilus somnus</name>
    <dbReference type="NCBI Taxonomy" id="228400"/>
    <lineage>
        <taxon>Bacteria</taxon>
        <taxon>Pseudomonadati</taxon>
        <taxon>Pseudomonadota</taxon>
        <taxon>Gammaproteobacteria</taxon>
        <taxon>Pasteurellales</taxon>
        <taxon>Pasteurellaceae</taxon>
        <taxon>Histophilus</taxon>
    </lineage>
</organism>
<evidence type="ECO:0000255" key="1">
    <source>
        <dbReference type="HAMAP-Rule" id="MF_00530"/>
    </source>
</evidence>
<keyword id="KW-0066">ATP synthesis</keyword>
<keyword id="KW-0997">Cell inner membrane</keyword>
<keyword id="KW-1003">Cell membrane</keyword>
<keyword id="KW-0139">CF(1)</keyword>
<keyword id="KW-0375">Hydrogen ion transport</keyword>
<keyword id="KW-0406">Ion transport</keyword>
<keyword id="KW-0472">Membrane</keyword>
<keyword id="KW-0813">Transport</keyword>